<dbReference type="EMBL" id="BC026483">
    <property type="protein sequence ID" value="AAH26483.1"/>
    <property type="molecule type" value="mRNA"/>
</dbReference>
<dbReference type="SMR" id="Q8R0S1"/>
<dbReference type="BioGRID" id="230215">
    <property type="interactions" value="3"/>
</dbReference>
<dbReference type="FunCoup" id="Q8R0S1">
    <property type="interactions" value="3023"/>
</dbReference>
<dbReference type="IntAct" id="Q8R0S1">
    <property type="interactions" value="1"/>
</dbReference>
<dbReference type="MINT" id="Q8R0S1"/>
<dbReference type="STRING" id="10090.ENSMUSP00000139181"/>
<dbReference type="GlyGen" id="Q8R0S1">
    <property type="glycosylation" value="2 sites, 1 O-linked glycan (1 site)"/>
</dbReference>
<dbReference type="iPTMnet" id="Q8R0S1"/>
<dbReference type="jPOST" id="Q8R0S1"/>
<dbReference type="PaxDb" id="10090-ENSMUSP00000104456"/>
<dbReference type="ProteomicsDB" id="265175"/>
<dbReference type="Pumba" id="Q8R0S1"/>
<dbReference type="Ensembl" id="ENSMUST00000108828.9">
    <property type="protein sequence ID" value="ENSMUSP00000104456.2"/>
    <property type="gene ID" value="ENSMUSG00000099083.8"/>
</dbReference>
<dbReference type="Ensembl" id="ENSMUST00000169033.8">
    <property type="protein sequence ID" value="ENSMUSP00000130130.2"/>
    <property type="gene ID" value="ENSMUSG00000099083.8"/>
</dbReference>
<dbReference type="UCSC" id="uc007xwo.1">
    <property type="organism name" value="mouse"/>
</dbReference>
<dbReference type="AGR" id="MGI:2443472"/>
<dbReference type="MGI" id="MGI:2443472">
    <property type="gene designation" value="Atf7"/>
</dbReference>
<dbReference type="VEuPathDB" id="HostDB:ENSMUSG00000099083"/>
<dbReference type="eggNOG" id="KOG1414">
    <property type="taxonomic scope" value="Eukaryota"/>
</dbReference>
<dbReference type="GeneTree" id="ENSGT00940000155261"/>
<dbReference type="HOGENOM" id="CLU_021564_0_0_1"/>
<dbReference type="InParanoid" id="Q8R0S1"/>
<dbReference type="PhylomeDB" id="Q8R0S1"/>
<dbReference type="ChiTaRS" id="Atf7">
    <property type="organism name" value="mouse"/>
</dbReference>
<dbReference type="PRO" id="PR:Q8R0S1"/>
<dbReference type="Proteomes" id="UP000000589">
    <property type="component" value="Chromosome 15"/>
</dbReference>
<dbReference type="RNAct" id="Q8R0S1">
    <property type="molecule type" value="protein"/>
</dbReference>
<dbReference type="Bgee" id="ENSMUSG00000099083">
    <property type="expression patterns" value="Expressed in embryonic brain and 144 other cell types or tissues"/>
</dbReference>
<dbReference type="ExpressionAtlas" id="Q8R0S1">
    <property type="expression patterns" value="baseline and differential"/>
</dbReference>
<dbReference type="GO" id="GO:0000781">
    <property type="term" value="C:chromosome, telomeric region"/>
    <property type="evidence" value="ECO:0007669"/>
    <property type="project" value="UniProtKB-SubCell"/>
</dbReference>
<dbReference type="GO" id="GO:0005654">
    <property type="term" value="C:nucleoplasm"/>
    <property type="evidence" value="ECO:0000250"/>
    <property type="project" value="UniProtKB"/>
</dbReference>
<dbReference type="GO" id="GO:0003677">
    <property type="term" value="F:DNA binding"/>
    <property type="evidence" value="ECO:0007669"/>
    <property type="project" value="UniProtKB-KW"/>
</dbReference>
<dbReference type="GO" id="GO:0003700">
    <property type="term" value="F:DNA-binding transcription factor activity"/>
    <property type="evidence" value="ECO:0007669"/>
    <property type="project" value="InterPro"/>
</dbReference>
<dbReference type="GO" id="GO:0008270">
    <property type="term" value="F:zinc ion binding"/>
    <property type="evidence" value="ECO:0007669"/>
    <property type="project" value="UniProtKB-KW"/>
</dbReference>
<dbReference type="GO" id="GO:0007507">
    <property type="term" value="P:heart development"/>
    <property type="evidence" value="ECO:0000316"/>
    <property type="project" value="MGI"/>
</dbReference>
<dbReference type="GO" id="GO:0002244">
    <property type="term" value="P:hematopoietic progenitor cell differentiation"/>
    <property type="evidence" value="ECO:0000316"/>
    <property type="project" value="MGI"/>
</dbReference>
<dbReference type="GO" id="GO:0097284">
    <property type="term" value="P:hepatocyte apoptotic process"/>
    <property type="evidence" value="ECO:0000316"/>
    <property type="project" value="MGI"/>
</dbReference>
<dbReference type="GO" id="GO:0001701">
    <property type="term" value="P:in utero embryonic development"/>
    <property type="evidence" value="ECO:0000316"/>
    <property type="project" value="MGI"/>
</dbReference>
<dbReference type="GO" id="GO:0001889">
    <property type="term" value="P:liver development"/>
    <property type="evidence" value="ECO:0000316"/>
    <property type="project" value="MGI"/>
</dbReference>
<dbReference type="GO" id="GO:0038066">
    <property type="term" value="P:p38MAPK cascade"/>
    <property type="evidence" value="ECO:0000316"/>
    <property type="project" value="MGI"/>
</dbReference>
<dbReference type="CDD" id="cd14687">
    <property type="entry name" value="bZIP_ATF2"/>
    <property type="match status" value="1"/>
</dbReference>
<dbReference type="CDD" id="cd12192">
    <property type="entry name" value="GCN4_cent"/>
    <property type="match status" value="1"/>
</dbReference>
<dbReference type="FunFam" id="1.20.5.170:FF:000010">
    <property type="entry name" value="Cyclic AMP-dependent transcription factor ATF-2"/>
    <property type="match status" value="1"/>
</dbReference>
<dbReference type="Gene3D" id="1.20.5.170">
    <property type="match status" value="1"/>
</dbReference>
<dbReference type="Gene3D" id="3.30.160.60">
    <property type="entry name" value="Classic Zinc Finger"/>
    <property type="match status" value="1"/>
</dbReference>
<dbReference type="InterPro" id="IPR004827">
    <property type="entry name" value="bZIP"/>
</dbReference>
<dbReference type="InterPro" id="IPR046347">
    <property type="entry name" value="bZIP_sf"/>
</dbReference>
<dbReference type="InterPro" id="IPR051027">
    <property type="entry name" value="bZIP_transcription_factors"/>
</dbReference>
<dbReference type="InterPro" id="IPR016378">
    <property type="entry name" value="TF_CRE-BP1-typ"/>
</dbReference>
<dbReference type="InterPro" id="IPR036236">
    <property type="entry name" value="Znf_C2H2_sf"/>
</dbReference>
<dbReference type="InterPro" id="IPR013087">
    <property type="entry name" value="Znf_C2H2_type"/>
</dbReference>
<dbReference type="PANTHER" id="PTHR19304">
    <property type="entry name" value="CYCLIC-AMP RESPONSE ELEMENT BINDING PROTEIN"/>
    <property type="match status" value="1"/>
</dbReference>
<dbReference type="Pfam" id="PF00170">
    <property type="entry name" value="bZIP_1"/>
    <property type="match status" value="1"/>
</dbReference>
<dbReference type="PIRSF" id="PIRSF003153">
    <property type="entry name" value="ATF2_CRE-BP1"/>
    <property type="match status" value="1"/>
</dbReference>
<dbReference type="SMART" id="SM00338">
    <property type="entry name" value="BRLZ"/>
    <property type="match status" value="1"/>
</dbReference>
<dbReference type="SMART" id="SM00355">
    <property type="entry name" value="ZnF_C2H2"/>
    <property type="match status" value="1"/>
</dbReference>
<dbReference type="SUPFAM" id="SSF57667">
    <property type="entry name" value="beta-beta-alpha zinc fingers"/>
    <property type="match status" value="1"/>
</dbReference>
<dbReference type="SUPFAM" id="SSF57959">
    <property type="entry name" value="Leucine zipper domain"/>
    <property type="match status" value="1"/>
</dbReference>
<dbReference type="PROSITE" id="PS50217">
    <property type="entry name" value="BZIP"/>
    <property type="match status" value="1"/>
</dbReference>
<dbReference type="PROSITE" id="PS00036">
    <property type="entry name" value="BZIP_BASIC"/>
    <property type="match status" value="1"/>
</dbReference>
<dbReference type="PROSITE" id="PS00028">
    <property type="entry name" value="ZINC_FINGER_C2H2_1"/>
    <property type="match status" value="1"/>
</dbReference>
<dbReference type="PROSITE" id="PS50157">
    <property type="entry name" value="ZINC_FINGER_C2H2_2"/>
    <property type="match status" value="1"/>
</dbReference>
<feature type="chain" id="PRO_0000076593" description="Cyclic AMP-dependent transcription factor ATF-7">
    <location>
        <begin position="1"/>
        <end position="413"/>
    </location>
</feature>
<feature type="domain" description="bZIP" evidence="4">
    <location>
        <begin position="332"/>
        <end position="395"/>
    </location>
</feature>
<feature type="zinc finger region" description="C2H2-type" evidence="3">
    <location>
        <begin position="7"/>
        <end position="31"/>
    </location>
</feature>
<feature type="region of interest" description="Transactivation domain" evidence="1">
    <location>
        <begin position="1"/>
        <end position="285"/>
    </location>
</feature>
<feature type="region of interest" description="Disordered" evidence="5">
    <location>
        <begin position="81"/>
        <end position="140"/>
    </location>
</feature>
<feature type="region of interest" description="Disordered" evidence="5">
    <location>
        <begin position="299"/>
        <end position="337"/>
    </location>
</feature>
<feature type="region of interest" description="Basic motif" evidence="4">
    <location>
        <begin position="334"/>
        <end position="354"/>
    </location>
</feature>
<feature type="region of interest" description="Leucine-zipper" evidence="4">
    <location>
        <begin position="360"/>
        <end position="388"/>
    </location>
</feature>
<feature type="compositionally biased region" description="Low complexity" evidence="5">
    <location>
        <begin position="114"/>
        <end position="126"/>
    </location>
</feature>
<feature type="compositionally biased region" description="Low complexity" evidence="5">
    <location>
        <begin position="307"/>
        <end position="320"/>
    </location>
</feature>
<feature type="compositionally biased region" description="Basic and acidic residues" evidence="5">
    <location>
        <begin position="326"/>
        <end position="337"/>
    </location>
</feature>
<feature type="modified residue" description="Phosphothreonine; by MAPK11" evidence="2">
    <location>
        <position position="51"/>
    </location>
</feature>
<feature type="modified residue" description="Phosphothreonine" evidence="2">
    <location>
        <position position="53"/>
    </location>
</feature>
<feature type="modified residue" description="Phosphothreonine" evidence="2">
    <location>
        <position position="101"/>
    </location>
</feature>
<feature type="cross-link" description="Glycyl lysine isopeptide (Lys-Gly) (interchain with G-Cter in SUMO1)" evidence="2">
    <location>
        <position position="107"/>
    </location>
</feature>
<protein>
    <recommendedName>
        <fullName>Cyclic AMP-dependent transcription factor ATF-7</fullName>
        <shortName>cAMP-dependent transcription factor ATF-7</shortName>
    </recommendedName>
    <alternativeName>
        <fullName>Activating transcription factor 7</fullName>
    </alternativeName>
    <alternativeName>
        <fullName>Transcription factor ATF-A</fullName>
    </alternativeName>
</protein>
<accession>Q8R0S1</accession>
<reference key="1">
    <citation type="journal article" date="2004" name="Genome Res.">
        <title>The status, quality, and expansion of the NIH full-length cDNA project: the Mammalian Gene Collection (MGC).</title>
        <authorList>
            <consortium name="The MGC Project Team"/>
        </authorList>
    </citation>
    <scope>NUCLEOTIDE SEQUENCE [LARGE SCALE MRNA]</scope>
    <source>
        <tissue>Eye</tissue>
    </source>
</reference>
<reference key="2">
    <citation type="journal article" date="2010" name="EMBO J.">
        <title>Social isolation stress induces ATF-7 phosphorylation and impairs silencing of the 5-HT 5B receptor gene.</title>
        <authorList>
            <person name="Maekawa T."/>
            <person name="Kim S."/>
            <person name="Nakai D."/>
            <person name="Makino C."/>
            <person name="Takagi T."/>
            <person name="Ogura H."/>
            <person name="Yamada K."/>
            <person name="Chatton B."/>
            <person name="Ishii S."/>
        </authorList>
    </citation>
    <scope>FUNCTION</scope>
    <scope>DISRUPTION PHENOTYPE</scope>
    <scope>SUBCELLULAR LOCATION</scope>
    <scope>PHOSPHORYLATION</scope>
</reference>
<reference key="3">
    <citation type="journal article" date="2018" name="Nucleic Acids Res.">
        <title>ATF7 mediates TNF-alpha-induced telomere shortening.</title>
        <authorList>
            <person name="Maekawa T."/>
            <person name="Liu B."/>
            <person name="Nakai D."/>
            <person name="Yoshida K."/>
            <person name="Nakamura K.I."/>
            <person name="Yasukawa M."/>
            <person name="Koike M."/>
            <person name="Takubo K."/>
            <person name="Chatton B."/>
            <person name="Ishikawa F."/>
            <person name="Masutomi K."/>
            <person name="Ishii S."/>
        </authorList>
    </citation>
    <scope>FUNCTION</scope>
    <scope>DISRUPTION PHENOTYPE</scope>
    <scope>PHOSPHORYLATION</scope>
    <scope>SUBCELLULAR LOCATION</scope>
</reference>
<reference key="4">
    <citation type="journal article" date="2019" name="Genes Cells">
        <title>Stress-induced and ATF7-dependent epigenetic change influences cellular senescence.</title>
        <authorList>
            <person name="Maekawa T."/>
            <person name="Liu B."/>
            <person name="Liu Y."/>
            <person name="Yoshida K."/>
            <person name="Muratani M."/>
            <person name="Chatton B."/>
            <person name="Ishii S."/>
        </authorList>
    </citation>
    <scope>FUNCTION</scope>
    <scope>DISRUPTION PHENOTYPE</scope>
</reference>
<reference key="5">
    <citation type="journal article" date="2019" name="IScience">
        <title>The Transcription Factor ATF7 Controls Adipocyte Differentiation and Thermogenic Gene Programming.</title>
        <authorList>
            <person name="Liu Y."/>
            <person name="Maekawa T."/>
            <person name="Yoshida K."/>
            <person name="Muratani M."/>
            <person name="Chatton B."/>
            <person name="Ishii S."/>
        </authorList>
    </citation>
    <scope>FUNCTION</scope>
    <scope>DISRUPTION PHENOTYPE</scope>
</reference>
<reference key="6">
    <citation type="journal article" date="2020" name="Cell. Mol. Gastroenterol. Hepatol.">
        <title>ATF2 and ATF7 Are Critical Mediators of Intestinal Epithelial Repair.</title>
        <authorList>
            <person name="Meijer B.J."/>
            <person name="Giugliano F.P."/>
            <person name="Baan B."/>
            <person name="van der Meer J.H.M."/>
            <person name="Meisner S."/>
            <person name="van Roest M."/>
            <person name="Koelink P.J."/>
            <person name="de Boer R.J."/>
            <person name="Jones N."/>
            <person name="Breitwieser W."/>
            <person name="van der Wel N.N."/>
            <person name="Wildenberg M.E."/>
            <person name="van den Brink G.R."/>
            <person name="Heijmans J."/>
            <person name="Muncan V."/>
        </authorList>
    </citation>
    <scope>FUNCTION</scope>
    <scope>PHOSPHORYLATION</scope>
    <scope>DISRUPTION PHENOTYPE</scope>
</reference>
<proteinExistence type="evidence at protein level"/>
<gene>
    <name type="primary">Atf7</name>
</gene>
<keyword id="KW-0010">Activator</keyword>
<keyword id="KW-0158">Chromosome</keyword>
<keyword id="KW-0238">DNA-binding</keyword>
<keyword id="KW-1017">Isopeptide bond</keyword>
<keyword id="KW-0479">Metal-binding</keyword>
<keyword id="KW-0539">Nucleus</keyword>
<keyword id="KW-0597">Phosphoprotein</keyword>
<keyword id="KW-1185">Reference proteome</keyword>
<keyword id="KW-0779">Telomere</keyword>
<keyword id="KW-0804">Transcription</keyword>
<keyword id="KW-0805">Transcription regulation</keyword>
<keyword id="KW-0832">Ubl conjugation</keyword>
<keyword id="KW-0862">Zinc</keyword>
<keyword id="KW-0863">Zinc-finger</keyword>
<evidence type="ECO:0000250" key="1"/>
<evidence type="ECO:0000250" key="2">
    <source>
        <dbReference type="UniProtKB" id="P17544"/>
    </source>
</evidence>
<evidence type="ECO:0000255" key="3">
    <source>
        <dbReference type="PROSITE-ProRule" id="PRU00042"/>
    </source>
</evidence>
<evidence type="ECO:0000255" key="4">
    <source>
        <dbReference type="PROSITE-ProRule" id="PRU00978"/>
    </source>
</evidence>
<evidence type="ECO:0000256" key="5">
    <source>
        <dbReference type="SAM" id="MobiDB-lite"/>
    </source>
</evidence>
<evidence type="ECO:0000269" key="6">
    <source>
    </source>
</evidence>
<evidence type="ECO:0000269" key="7">
    <source>
    </source>
</evidence>
<evidence type="ECO:0000269" key="8">
    <source>
    </source>
</evidence>
<evidence type="ECO:0000269" key="9">
    <source>
    </source>
</evidence>
<evidence type="ECO:0000269" key="10">
    <source>
    </source>
</evidence>
<evidence type="ECO:0000305" key="11"/>
<organism>
    <name type="scientific">Mus musculus</name>
    <name type="common">Mouse</name>
    <dbReference type="NCBI Taxonomy" id="10090"/>
    <lineage>
        <taxon>Eukaryota</taxon>
        <taxon>Metazoa</taxon>
        <taxon>Chordata</taxon>
        <taxon>Craniata</taxon>
        <taxon>Vertebrata</taxon>
        <taxon>Euteleostomi</taxon>
        <taxon>Mammalia</taxon>
        <taxon>Eutheria</taxon>
        <taxon>Euarchontoglires</taxon>
        <taxon>Glires</taxon>
        <taxon>Rodentia</taxon>
        <taxon>Myomorpha</taxon>
        <taxon>Muroidea</taxon>
        <taxon>Muridae</taxon>
        <taxon>Murinae</taxon>
        <taxon>Mus</taxon>
        <taxon>Mus</taxon>
    </lineage>
</organism>
<sequence>MGDDRPFVCSAPGCGQRFTNEDHLAVHKHKHEMTLKFGPARTDSVIIADQTPTPTRFLKNCEEVGLFNELASSFEHEFKKASDDDEKKGAAGPLDMSLPSTPDIKIKEEEPVEVDSSPPDSPASSPCSPPLKEKEVTTKPVVISTPTPTIVRPGSLPLHLGYDPLHPTLPSPTSVITQAPPSNRQIGSPTGSLPLVMHLANGQTMPMLPGPPVQMPSVISLARPVSMVPNIPGIPGPPVNNSGSISPSGHPMPSEAKMRLKATLTHQVSSINGGCGMVVGTASTMVTARPEQNQILIQHPDAPSPAQPQVSPAQPTPSTGGRRRRTVDEDPDERRQRFLERNRAAASRCRQKRKLWVSSLEKKAEELTSQNIQLSNEVTLLRNEVAQLKQLLLAHKDCPVTALQKKTQGYLGK</sequence>
<comment type="function">
    <text evidence="6 7 8 9 10">Stress-responsive chromatin regulator that plays a role in various biological processes including innate immunological memory, adipocyte differentiation or telomerase regulation (PubMed:29490055). In absence of stress, contributes to the formation of heterochromatin and heterochromatin-like structure by recruiting histone H3K9 tri- and di-methyltransferases thus silencing the transcription of target genes such as Htr5b, STAT1 in adipocytes, or genes involved in innate immunity in macrophages and adipocytes (PubMed:19893493, PubMed:30826729, PubMed:31294895). Phosphorylation of ATF7 disrupts interactions with histone methyltransferase and enhances the association with coactivators containing histone acetyltransferase and/or histone demethylase, leading to disruption of the heterochromatin-like structure and subsequently transcriptional activation (PubMed:19893493). In response to TNF-alpha, which is induced by various stresses, phosphorylated ATF7 and telomerase are released from telomeres leading to telomere shortening (PubMed:29490055). Also plays a role in maintaining epithelial regenerative capacity and protecting against cell death during intestinal epithelial damage and repair (PubMed:31958521).</text>
</comment>
<comment type="subunit">
    <text evidence="2">Homodimer; binds DNA as homodimer. Heterodimer; heterodimerizes with other members of ATF family and with JUN family members. Interacts with JNK2; the interaction does not phosphorylate ATF7 but acts as a docking site for other ATF-associated partners such as JUN family members. Interacts (via its transactivation domain) with TAF12 the interaction potentiates the transactivation activity and is inhibited by ATF7 sumoylation. Interacts with TAF4; the interaction inhibits the TAF12-dependent transactivation. Interacts with MAPK9; the interaction does not phosphorylate ATF7 but acts as a docking site for ATF7-associated partners such as JUN. Interacts with Ku complex components XRCC6 and XRCC7. Interacts with TERT.</text>
</comment>
<comment type="subcellular location">
    <subcellularLocation>
        <location evidence="4 6">Nucleus</location>
    </subcellularLocation>
    <subcellularLocation>
        <location evidence="2">Nucleus</location>
        <location evidence="2">Nucleoplasm</location>
    </subcellularLocation>
    <subcellularLocation>
        <location evidence="7">Chromosome</location>
        <location evidence="7">Telomere</location>
    </subcellularLocation>
    <text evidence="2">Mainly nucleoplasmic. Restricted distribution to the perinuculear region. The sumoylated form locates to the nuclear peiphery.</text>
</comment>
<comment type="PTM">
    <text evidence="2 6 7 10">On EGF stimulation, phosphorylated first on Thr-53 allowing subsequent phosphorylation on Thr-51. This latter phosphorylation prevents sumoylation, increases binding to TAF12 and enhances transcriptional activity (By similarity). Social isolation stress as well as TNF-alpha also induce the phosphorylation of ATF7 (PubMed:19893493, PubMed:29490055). Phosphorylated in proliferating colonic and small intestinal epithelial cells (PubMed:31958521).</text>
</comment>
<comment type="PTM">
    <text evidence="2">Sumoylation delays nuclear localization and inhibits transactivation activity through preventing binding to TAF12. RANBP2 appears to be the specific E3 ligase.</text>
</comment>
<comment type="disruption phenotype">
    <text evidence="6 7 8 9 10">Mice exhibit abnormal behaviors and increased 5-HT receptor 5B (Htr5b) mRNA levels in the dorsal raphe nuclei (PubMed:19893493). They also exhibit reduced adipose tissue mass, showing a role for ATF7 in adipocyte differentiation (PubMed:30826729). They develop severe ulceration and inflammation associated with increased epithelial apoptosis on dextran-sulfate sodium (DSS) exposure and were less able to regenerate colonic crypts on irradiation (PubMed:31294895). When combined with loss of ATF2, mice show even more epithelial damage in response to DSS (PubMed:31958521). In addition, loss of ATF7 leads to telomere shortening and chromosome instability (PubMed:29490055).</text>
</comment>
<comment type="similarity">
    <text evidence="11">Belongs to the bZIP family.</text>
</comment>
<name>ATF7_MOUSE</name>